<gene>
    <name evidence="1" type="primary">hprK</name>
    <name type="ordered locus">NMA0947</name>
</gene>
<comment type="function">
    <text evidence="1">Catalyzes the ATP- as well as the pyrophosphate-dependent phosphorylation of a specific serine residue in HPr, a phosphocarrier protein of the phosphoenolpyruvate-dependent sugar phosphotransferase system (PTS). HprK/P also catalyzes the pyrophosphate-producing, inorganic phosphate-dependent dephosphorylation (phosphorolysis) of seryl-phosphorylated HPr (P-Ser-HPr).</text>
</comment>
<comment type="catalytic activity">
    <reaction evidence="1">
        <text>[HPr protein]-L-serine + ATP = [HPr protein]-O-phospho-L-serine + ADP + H(+)</text>
        <dbReference type="Rhea" id="RHEA:46600"/>
        <dbReference type="Rhea" id="RHEA-COMP:11602"/>
        <dbReference type="Rhea" id="RHEA-COMP:11603"/>
        <dbReference type="ChEBI" id="CHEBI:15378"/>
        <dbReference type="ChEBI" id="CHEBI:29999"/>
        <dbReference type="ChEBI" id="CHEBI:30616"/>
        <dbReference type="ChEBI" id="CHEBI:83421"/>
        <dbReference type="ChEBI" id="CHEBI:456216"/>
    </reaction>
</comment>
<comment type="catalytic activity">
    <reaction evidence="1">
        <text>[HPr protein]-O-phospho-L-serine + phosphate + H(+) = [HPr protein]-L-serine + diphosphate</text>
        <dbReference type="Rhea" id="RHEA:46604"/>
        <dbReference type="Rhea" id="RHEA-COMP:11602"/>
        <dbReference type="Rhea" id="RHEA-COMP:11603"/>
        <dbReference type="ChEBI" id="CHEBI:15378"/>
        <dbReference type="ChEBI" id="CHEBI:29999"/>
        <dbReference type="ChEBI" id="CHEBI:33019"/>
        <dbReference type="ChEBI" id="CHEBI:43474"/>
        <dbReference type="ChEBI" id="CHEBI:83421"/>
    </reaction>
</comment>
<comment type="cofactor">
    <cofactor evidence="1">
        <name>Mg(2+)</name>
        <dbReference type="ChEBI" id="CHEBI:18420"/>
    </cofactor>
</comment>
<comment type="subunit">
    <text evidence="1">Homohexamer.</text>
</comment>
<comment type="domain">
    <text evidence="1">The Walker A ATP-binding motif also binds Pi and PPi.</text>
</comment>
<comment type="miscellaneous">
    <text evidence="1">Both phosphorylation and phosphorolysis are carried out by the same active site and suggest a common mechanism for both reactions.</text>
</comment>
<comment type="similarity">
    <text evidence="1">Belongs to the HPrK/P family.</text>
</comment>
<sequence length="320" mass="35799">MPSISVRRLFDDNQYKLQLAWAAGNSGADNRIGVEADKPVLALVGHLNFIHPNQIQVVGLAESEYLNRLESGETGYQFGDLFDISMSLVIVANGLPVSPGLRDYCHKNDIPLLTSKLESPYLMDVLRIYLQRTLAASSVKHGVFLDVFEIGVLITGHSGLGKSELALELISRGHSLIADDAVELFRIGPETLEGRCSPMLRDFLEVRGLGILNIRHIFGETSIRPKKILQLIINLVEADDEYMKQLDRLSIRTETESILNVNVRSVTLPVAVGRNLAVLVEAAVRNYILQLRGKDSTREFLERHQTQLKENEQHNENRPD</sequence>
<reference key="1">
    <citation type="journal article" date="2000" name="Nature">
        <title>Complete DNA sequence of a serogroup A strain of Neisseria meningitidis Z2491.</title>
        <authorList>
            <person name="Parkhill J."/>
            <person name="Achtman M."/>
            <person name="James K.D."/>
            <person name="Bentley S.D."/>
            <person name="Churcher C.M."/>
            <person name="Klee S.R."/>
            <person name="Morelli G."/>
            <person name="Basham D."/>
            <person name="Brown D."/>
            <person name="Chillingworth T."/>
            <person name="Davies R.M."/>
            <person name="Davis P."/>
            <person name="Devlin K."/>
            <person name="Feltwell T."/>
            <person name="Hamlin N."/>
            <person name="Holroyd S."/>
            <person name="Jagels K."/>
            <person name="Leather S."/>
            <person name="Moule S."/>
            <person name="Mungall K.L."/>
            <person name="Quail M.A."/>
            <person name="Rajandream M.A."/>
            <person name="Rutherford K.M."/>
            <person name="Simmonds M."/>
            <person name="Skelton J."/>
            <person name="Whitehead S."/>
            <person name="Spratt B.G."/>
            <person name="Barrell B.G."/>
        </authorList>
    </citation>
    <scope>NUCLEOTIDE SEQUENCE [LARGE SCALE GENOMIC DNA]</scope>
    <source>
        <strain>DSM 15465 / Z2491</strain>
    </source>
</reference>
<feature type="chain" id="PRO_0000058975" description="HPr kinase/phosphorylase">
    <location>
        <begin position="1"/>
        <end position="320"/>
    </location>
</feature>
<feature type="region of interest" description="Important for the catalytic mechanism of both phosphorylation and dephosphorylation" evidence="1">
    <location>
        <begin position="204"/>
        <end position="213"/>
    </location>
</feature>
<feature type="region of interest" description="Important for the catalytic mechanism of dephosphorylation" evidence="1">
    <location>
        <begin position="269"/>
        <end position="274"/>
    </location>
</feature>
<feature type="active site" evidence="1">
    <location>
        <position position="141"/>
    </location>
</feature>
<feature type="active site" evidence="1">
    <location>
        <position position="162"/>
    </location>
</feature>
<feature type="active site" description="Proton acceptor; for phosphorylation activity. Proton donor; for dephosphorylation activity" evidence="1">
    <location>
        <position position="180"/>
    </location>
</feature>
<feature type="active site" evidence="1">
    <location>
        <position position="248"/>
    </location>
</feature>
<feature type="binding site" evidence="1">
    <location>
        <begin position="156"/>
        <end position="163"/>
    </location>
    <ligand>
        <name>ATP</name>
        <dbReference type="ChEBI" id="CHEBI:30616"/>
    </ligand>
</feature>
<feature type="binding site" evidence="1">
    <location>
        <position position="163"/>
    </location>
    <ligand>
        <name>Mg(2+)</name>
        <dbReference type="ChEBI" id="CHEBI:18420"/>
    </ligand>
</feature>
<feature type="binding site" evidence="1">
    <location>
        <position position="205"/>
    </location>
    <ligand>
        <name>Mg(2+)</name>
        <dbReference type="ChEBI" id="CHEBI:18420"/>
    </ligand>
</feature>
<keyword id="KW-0067">ATP-binding</keyword>
<keyword id="KW-0418">Kinase</keyword>
<keyword id="KW-0460">Magnesium</keyword>
<keyword id="KW-0479">Metal-binding</keyword>
<keyword id="KW-0511">Multifunctional enzyme</keyword>
<keyword id="KW-0547">Nucleotide-binding</keyword>
<keyword id="KW-0723">Serine/threonine-protein kinase</keyword>
<keyword id="KW-0808">Transferase</keyword>
<name>HPRK_NEIMA</name>
<accession>Q9JV91</accession>
<accession>A1IQY9</accession>
<dbReference type="EC" id="2.7.11.-" evidence="1"/>
<dbReference type="EC" id="2.7.4.-" evidence="1"/>
<dbReference type="EMBL" id="AL157959">
    <property type="protein sequence ID" value="CAM08173.1"/>
    <property type="molecule type" value="Genomic_DNA"/>
</dbReference>
<dbReference type="PIR" id="C81941">
    <property type="entry name" value="C81941"/>
</dbReference>
<dbReference type="RefSeq" id="WP_002222748.1">
    <property type="nucleotide sequence ID" value="NC_003116.1"/>
</dbReference>
<dbReference type="SMR" id="Q9JV91"/>
<dbReference type="EnsemblBacteria" id="CAM08173">
    <property type="protein sequence ID" value="CAM08173"/>
    <property type="gene ID" value="NMA0947"/>
</dbReference>
<dbReference type="KEGG" id="nma:NMA0947"/>
<dbReference type="HOGENOM" id="CLU_052030_0_2_4"/>
<dbReference type="Proteomes" id="UP000000626">
    <property type="component" value="Chromosome"/>
</dbReference>
<dbReference type="GO" id="GO:0005524">
    <property type="term" value="F:ATP binding"/>
    <property type="evidence" value="ECO:0007669"/>
    <property type="project" value="UniProtKB-UniRule"/>
</dbReference>
<dbReference type="GO" id="GO:0000287">
    <property type="term" value="F:magnesium ion binding"/>
    <property type="evidence" value="ECO:0007669"/>
    <property type="project" value="UniProtKB-UniRule"/>
</dbReference>
<dbReference type="GO" id="GO:0000155">
    <property type="term" value="F:phosphorelay sensor kinase activity"/>
    <property type="evidence" value="ECO:0007669"/>
    <property type="project" value="InterPro"/>
</dbReference>
<dbReference type="GO" id="GO:0004674">
    <property type="term" value="F:protein serine/threonine kinase activity"/>
    <property type="evidence" value="ECO:0007669"/>
    <property type="project" value="UniProtKB-KW"/>
</dbReference>
<dbReference type="GO" id="GO:0004712">
    <property type="term" value="F:protein serine/threonine/tyrosine kinase activity"/>
    <property type="evidence" value="ECO:0007669"/>
    <property type="project" value="UniProtKB-UniRule"/>
</dbReference>
<dbReference type="GO" id="GO:0006109">
    <property type="term" value="P:regulation of carbohydrate metabolic process"/>
    <property type="evidence" value="ECO:0007669"/>
    <property type="project" value="UniProtKB-UniRule"/>
</dbReference>
<dbReference type="CDD" id="cd01918">
    <property type="entry name" value="HprK_C"/>
    <property type="match status" value="1"/>
</dbReference>
<dbReference type="FunFam" id="3.40.1390.20:FF:000004">
    <property type="entry name" value="HPr kinase/phosphorylase"/>
    <property type="match status" value="1"/>
</dbReference>
<dbReference type="FunFam" id="3.40.50.300:FF:000174">
    <property type="entry name" value="HPr kinase/phosphorylase"/>
    <property type="match status" value="1"/>
</dbReference>
<dbReference type="Gene3D" id="3.40.1390.20">
    <property type="entry name" value="HprK N-terminal domain-like"/>
    <property type="match status" value="1"/>
</dbReference>
<dbReference type="Gene3D" id="3.40.50.300">
    <property type="entry name" value="P-loop containing nucleotide triphosphate hydrolases"/>
    <property type="match status" value="1"/>
</dbReference>
<dbReference type="HAMAP" id="MF_01249">
    <property type="entry name" value="HPr_kinase"/>
    <property type="match status" value="1"/>
</dbReference>
<dbReference type="InterPro" id="IPR003755">
    <property type="entry name" value="HPr(Ser)_kin/Pase"/>
</dbReference>
<dbReference type="InterPro" id="IPR011104">
    <property type="entry name" value="Hpr_kin/Pase_C"/>
</dbReference>
<dbReference type="InterPro" id="IPR011126">
    <property type="entry name" value="Hpr_kin/Pase_Hpr_N"/>
</dbReference>
<dbReference type="InterPro" id="IPR027417">
    <property type="entry name" value="P-loop_NTPase"/>
</dbReference>
<dbReference type="InterPro" id="IPR028979">
    <property type="entry name" value="Ser_kin/Pase_Hpr-like_N_sf"/>
</dbReference>
<dbReference type="NCBIfam" id="TIGR00679">
    <property type="entry name" value="hpr-ser"/>
    <property type="match status" value="1"/>
</dbReference>
<dbReference type="PANTHER" id="PTHR30305:SF1">
    <property type="entry name" value="HPR KINASE_PHOSPHORYLASE"/>
    <property type="match status" value="1"/>
</dbReference>
<dbReference type="PANTHER" id="PTHR30305">
    <property type="entry name" value="PROTEIN YJDM-RELATED"/>
    <property type="match status" value="1"/>
</dbReference>
<dbReference type="Pfam" id="PF07475">
    <property type="entry name" value="Hpr_kinase_C"/>
    <property type="match status" value="1"/>
</dbReference>
<dbReference type="Pfam" id="PF02603">
    <property type="entry name" value="Hpr_kinase_N"/>
    <property type="match status" value="1"/>
</dbReference>
<dbReference type="SUPFAM" id="SSF75138">
    <property type="entry name" value="HprK N-terminal domain-like"/>
    <property type="match status" value="1"/>
</dbReference>
<dbReference type="SUPFAM" id="SSF53795">
    <property type="entry name" value="PEP carboxykinase-like"/>
    <property type="match status" value="1"/>
</dbReference>
<proteinExistence type="inferred from homology"/>
<organism>
    <name type="scientific">Neisseria meningitidis serogroup A / serotype 4A (strain DSM 15465 / Z2491)</name>
    <dbReference type="NCBI Taxonomy" id="122587"/>
    <lineage>
        <taxon>Bacteria</taxon>
        <taxon>Pseudomonadati</taxon>
        <taxon>Pseudomonadota</taxon>
        <taxon>Betaproteobacteria</taxon>
        <taxon>Neisseriales</taxon>
        <taxon>Neisseriaceae</taxon>
        <taxon>Neisseria</taxon>
    </lineage>
</organism>
<evidence type="ECO:0000255" key="1">
    <source>
        <dbReference type="HAMAP-Rule" id="MF_01249"/>
    </source>
</evidence>
<protein>
    <recommendedName>
        <fullName evidence="1">HPr kinase/phosphorylase</fullName>
        <shortName evidence="1">HPrK/P</shortName>
        <ecNumber evidence="1">2.7.11.-</ecNumber>
        <ecNumber evidence="1">2.7.4.-</ecNumber>
    </recommendedName>
    <alternativeName>
        <fullName evidence="1">HPr(Ser) kinase/phosphorylase</fullName>
    </alternativeName>
</protein>